<accession>Q8WY21</accession>
<accession>A2RRF4</accession>
<accession>Q59GG7</accession>
<accession>Q5JVT7</accession>
<accession>Q5JVT8</accession>
<accession>Q5VY14</accession>
<accession>Q86WQ1</accession>
<accession>Q86WQ2</accession>
<accession>Q9H1Y1</accession>
<accession>Q9H1Y2</accession>
<sequence length="1168" mass="129635">MGKVGAGGGSQARLSALLAGAGLLILCAPGVCGGGSCCPSPHPSSAPRSASTPRGFSHQGRPGRAPATPLPLVVRPLFSVAPGDRALSLERARGTGASMAVAARSGRRRRSGADQEKAERGEGASRSPRGVLRDGGQQEPGTRERDPDKATRFRMEELRLTSTTFALTGDSAHNQAMVHWSGHNSSVILILTKLYDYNLGSITESSLWRSTDYGTTYEKLNDKVGLKTILSYLYVCPTNKRKIMLLTDPEIESSLLISSDEGATYQKYRLNFYIQSLLFHPKQEDWILAYSQDQKLYSSAEFGRRWQLIQEGVVPNRFYWSVMGSNKEPDLVHLEARTVDGHSHYLTCRMQNCTEANRNQPFPGYIDPDSLIVQDHYVFVQLTSGGRPHYYVSYRRNAFAQMKLPKYALPKDMHVISTDENQVFAAVQEWNQNDTYNLYISDTRGVYFTLALENVQSSRGPEGNIMIDLYEVAGIKGMFLANKKIDNQVKTFITYNKGRDWRLLQAPDTDLRGDPVHCLLPYCSLHLHLKVSENPYTSGIIASKDTAPSIIVASGNIGSELSDTDISMFVSSDAGNTWRQIFEEEHSVLYLDQGGVLVAMKHTSLPIRHLWLSFDEGRSWSKYSFTSIPLFVDGVLGEPGEETLIMTVFGHFSHRSEWQLVKVDYKSIFDRRCAEEDYRPWQLHSQGEACIMGAKRIYKKRKSERKCMQGKYAGAMESEPCVCTEADFDCDYGYERHSNGQCLPAFWFNPSSLSKDCSLGQSYLNSTGYRKVVSNNCTDGVREQYTAKPQKCPGKAPRGLRIVTADGKLTAEQGHNVTLMVQLEEGDVQRTLIQVDFGDGIAVSYVNLSSMEDGIKHVYQNVGIFRVTVQVDNSLGSDSAVLYLHVTCPLEHVHLSLPFVTTKNKEVNATAVLWPSQVGTLTYVWWYGNNTEPLITLEGSISFRFTSEGMNTITVQVSAGNAILQDTKTIAVYEEFRSLRLSFSPNLDDYNPDIPEWRRDIGRVIKKSLVEATGVPGQHILVAVLPGLPTTAELFVLPYQDPAGENKRSTDDLEQISELLIHTLNQNSVHFELKPGVRVLVHAAHLTAAPLVDLTPTHSGSAMLMLLSVVFVGLAVFVIYKFKRRVALPSPPSPSTQPGDSSLRLQRARHATPPSTPKRGSAGAQYAI</sequence>
<organism>
    <name type="scientific">Homo sapiens</name>
    <name type="common">Human</name>
    <dbReference type="NCBI Taxonomy" id="9606"/>
    <lineage>
        <taxon>Eukaryota</taxon>
        <taxon>Metazoa</taxon>
        <taxon>Chordata</taxon>
        <taxon>Craniata</taxon>
        <taxon>Vertebrata</taxon>
        <taxon>Euteleostomi</taxon>
        <taxon>Mammalia</taxon>
        <taxon>Eutheria</taxon>
        <taxon>Euarchontoglires</taxon>
        <taxon>Primates</taxon>
        <taxon>Haplorrhini</taxon>
        <taxon>Catarrhini</taxon>
        <taxon>Hominidae</taxon>
        <taxon>Homo</taxon>
    </lineage>
</organism>
<keyword id="KW-0025">Alternative splicing</keyword>
<keyword id="KW-0325">Glycoprotein</keyword>
<keyword id="KW-0472">Membrane</keyword>
<keyword id="KW-1267">Proteomics identification</keyword>
<keyword id="KW-1185">Reference proteome</keyword>
<keyword id="KW-0677">Repeat</keyword>
<keyword id="KW-0732">Signal</keyword>
<keyword id="KW-0812">Transmembrane</keyword>
<keyword id="KW-1133">Transmembrane helix</keyword>
<gene>
    <name type="primary">SORCS1</name>
    <name type="synonym">SORCS</name>
</gene>
<reference key="1">
    <citation type="journal article" date="2003" name="J. Biol. Chem.">
        <title>Characterization of sorCS1, an alternatively spliced receptor with completely different cytoplasmic domains that mediate different trafficking in cells.</title>
        <authorList>
            <person name="Hermey G."/>
            <person name="Keat S.J."/>
            <person name="Madsen P."/>
            <person name="Jacobsen C."/>
            <person name="Petersen C.M."/>
            <person name="Gliemann J."/>
        </authorList>
    </citation>
    <scope>NUCLEOTIDE SEQUENCE [MRNA] (ISOFORMS 1; 3 AND 4)</scope>
</reference>
<reference key="2">
    <citation type="submission" date="2005-03" db="EMBL/GenBank/DDBJ databases">
        <authorList>
            <person name="Totoki Y."/>
            <person name="Toyoda A."/>
            <person name="Takeda T."/>
            <person name="Sakaki Y."/>
            <person name="Tanaka A."/>
            <person name="Yokoyama S."/>
            <person name="Ohara O."/>
            <person name="Nagase T."/>
            <person name="Kikuno R.F."/>
        </authorList>
    </citation>
    <scope>NUCLEOTIDE SEQUENCE [LARGE SCALE MRNA] (ISOFORM 1)</scope>
    <source>
        <tissue>Brain</tissue>
    </source>
</reference>
<reference key="3">
    <citation type="journal article" date="2004" name="Nature">
        <title>The DNA sequence and comparative analysis of human chromosome 10.</title>
        <authorList>
            <person name="Deloukas P."/>
            <person name="Earthrowl M.E."/>
            <person name="Grafham D.V."/>
            <person name="Rubenfield M."/>
            <person name="French L."/>
            <person name="Steward C.A."/>
            <person name="Sims S.K."/>
            <person name="Jones M.C."/>
            <person name="Searle S."/>
            <person name="Scott C."/>
            <person name="Howe K."/>
            <person name="Hunt S.E."/>
            <person name="Andrews T.D."/>
            <person name="Gilbert J.G.R."/>
            <person name="Swarbreck D."/>
            <person name="Ashurst J.L."/>
            <person name="Taylor A."/>
            <person name="Battles J."/>
            <person name="Bird C.P."/>
            <person name="Ainscough R."/>
            <person name="Almeida J.P."/>
            <person name="Ashwell R.I.S."/>
            <person name="Ambrose K.D."/>
            <person name="Babbage A.K."/>
            <person name="Bagguley C.L."/>
            <person name="Bailey J."/>
            <person name="Banerjee R."/>
            <person name="Bates K."/>
            <person name="Beasley H."/>
            <person name="Bray-Allen S."/>
            <person name="Brown A.J."/>
            <person name="Brown J.Y."/>
            <person name="Burford D.C."/>
            <person name="Burrill W."/>
            <person name="Burton J."/>
            <person name="Cahill P."/>
            <person name="Camire D."/>
            <person name="Carter N.P."/>
            <person name="Chapman J.C."/>
            <person name="Clark S.Y."/>
            <person name="Clarke G."/>
            <person name="Clee C.M."/>
            <person name="Clegg S."/>
            <person name="Corby N."/>
            <person name="Coulson A."/>
            <person name="Dhami P."/>
            <person name="Dutta I."/>
            <person name="Dunn M."/>
            <person name="Faulkner L."/>
            <person name="Frankish A."/>
            <person name="Frankland J.A."/>
            <person name="Garner P."/>
            <person name="Garnett J."/>
            <person name="Gribble S."/>
            <person name="Griffiths C."/>
            <person name="Grocock R."/>
            <person name="Gustafson E."/>
            <person name="Hammond S."/>
            <person name="Harley J.L."/>
            <person name="Hart E."/>
            <person name="Heath P.D."/>
            <person name="Ho T.P."/>
            <person name="Hopkins B."/>
            <person name="Horne J."/>
            <person name="Howden P.J."/>
            <person name="Huckle E."/>
            <person name="Hynds C."/>
            <person name="Johnson C."/>
            <person name="Johnson D."/>
            <person name="Kana A."/>
            <person name="Kay M."/>
            <person name="Kimberley A.M."/>
            <person name="Kershaw J.K."/>
            <person name="Kokkinaki M."/>
            <person name="Laird G.K."/>
            <person name="Lawlor S."/>
            <person name="Lee H.M."/>
            <person name="Leongamornlert D.A."/>
            <person name="Laird G."/>
            <person name="Lloyd C."/>
            <person name="Lloyd D.M."/>
            <person name="Loveland J."/>
            <person name="Lovell J."/>
            <person name="McLaren S."/>
            <person name="McLay K.E."/>
            <person name="McMurray A."/>
            <person name="Mashreghi-Mohammadi M."/>
            <person name="Matthews L."/>
            <person name="Milne S."/>
            <person name="Nickerson T."/>
            <person name="Nguyen M."/>
            <person name="Overton-Larty E."/>
            <person name="Palmer S.A."/>
            <person name="Pearce A.V."/>
            <person name="Peck A.I."/>
            <person name="Pelan S."/>
            <person name="Phillimore B."/>
            <person name="Porter K."/>
            <person name="Rice C.M."/>
            <person name="Rogosin A."/>
            <person name="Ross M.T."/>
            <person name="Sarafidou T."/>
            <person name="Sehra H.K."/>
            <person name="Shownkeen R."/>
            <person name="Skuce C.D."/>
            <person name="Smith M."/>
            <person name="Standring L."/>
            <person name="Sycamore N."/>
            <person name="Tester J."/>
            <person name="Thorpe A."/>
            <person name="Torcasso W."/>
            <person name="Tracey A."/>
            <person name="Tromans A."/>
            <person name="Tsolas J."/>
            <person name="Wall M."/>
            <person name="Walsh J."/>
            <person name="Wang H."/>
            <person name="Weinstock K."/>
            <person name="West A.P."/>
            <person name="Willey D.L."/>
            <person name="Whitehead S.L."/>
            <person name="Wilming L."/>
            <person name="Wray P.W."/>
            <person name="Young L."/>
            <person name="Chen Y."/>
            <person name="Lovering R.C."/>
            <person name="Moschonas N.K."/>
            <person name="Siebert R."/>
            <person name="Fechtel K."/>
            <person name="Bentley D."/>
            <person name="Durbin R.M."/>
            <person name="Hubbard T."/>
            <person name="Doucette-Stamm L."/>
            <person name="Beck S."/>
            <person name="Smith D.R."/>
            <person name="Rogers J."/>
        </authorList>
    </citation>
    <scope>NUCLEOTIDE SEQUENCE [LARGE SCALE GENOMIC DNA]</scope>
</reference>
<reference key="4">
    <citation type="submission" date="2005-09" db="EMBL/GenBank/DDBJ databases">
        <authorList>
            <person name="Mural R.J."/>
            <person name="Istrail S."/>
            <person name="Sutton G.G."/>
            <person name="Florea L."/>
            <person name="Halpern A.L."/>
            <person name="Mobarry C.M."/>
            <person name="Lippert R."/>
            <person name="Walenz B."/>
            <person name="Shatkay H."/>
            <person name="Dew I."/>
            <person name="Miller J.R."/>
            <person name="Flanigan M.J."/>
            <person name="Edwards N.J."/>
            <person name="Bolanos R."/>
            <person name="Fasulo D."/>
            <person name="Halldorsson B.V."/>
            <person name="Hannenhalli S."/>
            <person name="Turner R."/>
            <person name="Yooseph S."/>
            <person name="Lu F."/>
            <person name="Nusskern D.R."/>
            <person name="Shue B.C."/>
            <person name="Zheng X.H."/>
            <person name="Zhong F."/>
            <person name="Delcher A.L."/>
            <person name="Huson D.H."/>
            <person name="Kravitz S.A."/>
            <person name="Mouchard L."/>
            <person name="Reinert K."/>
            <person name="Remington K.A."/>
            <person name="Clark A.G."/>
            <person name="Waterman M.S."/>
            <person name="Eichler E.E."/>
            <person name="Adams M.D."/>
            <person name="Hunkapiller M.W."/>
            <person name="Myers E.W."/>
            <person name="Venter J.C."/>
        </authorList>
    </citation>
    <scope>NUCLEOTIDE SEQUENCE [LARGE SCALE GENOMIC DNA]</scope>
</reference>
<reference key="5">
    <citation type="journal article" date="2004" name="Genome Res.">
        <title>The status, quality, and expansion of the NIH full-length cDNA project: the Mammalian Gene Collection (MGC).</title>
        <authorList>
            <consortium name="The MGC Project Team"/>
        </authorList>
    </citation>
    <scope>NUCLEOTIDE SEQUENCE [LARGE SCALE MRNA] (ISOFORM 1)</scope>
</reference>
<reference key="6">
    <citation type="journal article" date="2001" name="Hum. Genet.">
        <title>The genes for the human VPS10 domain-containing receptors are large and contain many small exons.</title>
        <authorList>
            <person name="Hampe W."/>
            <person name="Rezgaoui M."/>
            <person name="Hermans-Borgmeyer I."/>
            <person name="Schaller H.C."/>
        </authorList>
    </citation>
    <scope>REVIEW</scope>
</reference>
<reference key="7">
    <citation type="journal article" date="2013" name="J. Proteome Res.">
        <title>LC-MS/MS characterization of O-glycosylation sites and glycan structures of human cerebrospinal fluid glycoproteins.</title>
        <authorList>
            <person name="Halim A."/>
            <person name="Ruetschi U."/>
            <person name="Larson G."/>
            <person name="Nilsson J."/>
        </authorList>
    </citation>
    <scope>GLYCOSYLATION AT THR-68</scope>
    <scope>IDENTIFICATION BY MASS SPECTROMETRY</scope>
</reference>
<reference key="8">
    <citation type="journal article" date="2006" name="Science">
        <title>The consensus coding sequences of human breast and colorectal cancers.</title>
        <authorList>
            <person name="Sjoeblom T."/>
            <person name="Jones S."/>
            <person name="Wood L.D."/>
            <person name="Parsons D.W."/>
            <person name="Lin J."/>
            <person name="Barber T.D."/>
            <person name="Mandelker D."/>
            <person name="Leary R.J."/>
            <person name="Ptak J."/>
            <person name="Silliman N."/>
            <person name="Szabo S."/>
            <person name="Buckhaults P."/>
            <person name="Farrell C."/>
            <person name="Meeh P."/>
            <person name="Markowitz S.D."/>
            <person name="Willis J."/>
            <person name="Dawson D."/>
            <person name="Willson J.K.V."/>
            <person name="Gazdar A.F."/>
            <person name="Hartigan J."/>
            <person name="Wu L."/>
            <person name="Liu C."/>
            <person name="Parmigiani G."/>
            <person name="Park B.H."/>
            <person name="Bachman K.E."/>
            <person name="Papadopoulos N."/>
            <person name="Vogelstein B."/>
            <person name="Kinzler K.W."/>
            <person name="Velculescu V.E."/>
        </authorList>
    </citation>
    <scope>VARIANT [LARGE SCALE ANALYSIS] ASN-223</scope>
</reference>
<dbReference type="EMBL" id="AF284756">
    <property type="protein sequence ID" value="AAL56667.1"/>
    <property type="molecule type" value="mRNA"/>
</dbReference>
<dbReference type="EMBL" id="AY099452">
    <property type="protein sequence ID" value="AAM43811.1"/>
    <property type="molecule type" value="mRNA"/>
</dbReference>
<dbReference type="EMBL" id="AY099453">
    <property type="protein sequence ID" value="AAM43812.1"/>
    <property type="molecule type" value="mRNA"/>
</dbReference>
<dbReference type="EMBL" id="AB209142">
    <property type="protein sequence ID" value="BAD92379.1"/>
    <property type="status" value="ALT_INIT"/>
    <property type="molecule type" value="mRNA"/>
</dbReference>
<dbReference type="EMBL" id="AL133395">
    <property type="status" value="NOT_ANNOTATED_CDS"/>
    <property type="molecule type" value="Genomic_DNA"/>
</dbReference>
<dbReference type="EMBL" id="AL160010">
    <property type="status" value="NOT_ANNOTATED_CDS"/>
    <property type="molecule type" value="Genomic_DNA"/>
</dbReference>
<dbReference type="EMBL" id="AL356255">
    <property type="status" value="NOT_ANNOTATED_CDS"/>
    <property type="molecule type" value="Genomic_DNA"/>
</dbReference>
<dbReference type="EMBL" id="AL356308">
    <property type="status" value="NOT_ANNOTATED_CDS"/>
    <property type="molecule type" value="Genomic_DNA"/>
</dbReference>
<dbReference type="EMBL" id="AL357333">
    <property type="status" value="NOT_ANNOTATED_CDS"/>
    <property type="molecule type" value="Genomic_DNA"/>
</dbReference>
<dbReference type="EMBL" id="CH471066">
    <property type="protein sequence ID" value="EAW49583.1"/>
    <property type="molecule type" value="Genomic_DNA"/>
</dbReference>
<dbReference type="EMBL" id="BC131597">
    <property type="protein sequence ID" value="AAI31598.1"/>
    <property type="molecule type" value="mRNA"/>
</dbReference>
<dbReference type="CCDS" id="CCDS7559.1">
    <molecule id="Q8WY21-1"/>
</dbReference>
<dbReference type="RefSeq" id="NP_001013049.1">
    <molecule id="Q8WY21-2"/>
    <property type="nucleotide sequence ID" value="NM_001013031.3"/>
</dbReference>
<dbReference type="RefSeq" id="NP_001193498.1">
    <molecule id="Q8WY21-3"/>
    <property type="nucleotide sequence ID" value="NM_001206569.2"/>
</dbReference>
<dbReference type="RefSeq" id="NP_001193499.1">
    <property type="nucleotide sequence ID" value="NM_001206570.1"/>
</dbReference>
<dbReference type="RefSeq" id="NP_001193500.1">
    <molecule id="Q8WY21-4"/>
    <property type="nucleotide sequence ID" value="NM_001206571.2"/>
</dbReference>
<dbReference type="RefSeq" id="NP_001193501.1">
    <property type="nucleotide sequence ID" value="NM_001206572.1"/>
</dbReference>
<dbReference type="RefSeq" id="NP_443150.3">
    <molecule id="Q8WY21-1"/>
    <property type="nucleotide sequence ID" value="NM_052918.4"/>
</dbReference>
<dbReference type="SMR" id="Q8WY21"/>
<dbReference type="BioGRID" id="125367">
    <property type="interactions" value="4"/>
</dbReference>
<dbReference type="FunCoup" id="Q8WY21">
    <property type="interactions" value="290"/>
</dbReference>
<dbReference type="IntAct" id="Q8WY21">
    <property type="interactions" value="3"/>
</dbReference>
<dbReference type="STRING" id="9606.ENSP00000263054"/>
<dbReference type="TCDB" id="9.A.63.1.5">
    <property type="family name" value="the retromer-dependent vacuolar protein sorting (r-vps) family"/>
</dbReference>
<dbReference type="GlyCosmos" id="Q8WY21">
    <property type="glycosylation" value="10 sites, No reported glycans"/>
</dbReference>
<dbReference type="GlyGen" id="Q8WY21">
    <property type="glycosylation" value="10 sites, 3 N-linked glycans (3 sites)"/>
</dbReference>
<dbReference type="iPTMnet" id="Q8WY21"/>
<dbReference type="PhosphoSitePlus" id="Q8WY21"/>
<dbReference type="BioMuta" id="SORCS1"/>
<dbReference type="DMDM" id="66774216"/>
<dbReference type="jPOST" id="Q8WY21"/>
<dbReference type="MassIVE" id="Q8WY21"/>
<dbReference type="PaxDb" id="9606-ENSP00000263054"/>
<dbReference type="PeptideAtlas" id="Q8WY21"/>
<dbReference type="ProteomicsDB" id="75119">
    <molecule id="Q8WY21-1"/>
</dbReference>
<dbReference type="ProteomicsDB" id="75120">
    <molecule id="Q8WY21-2"/>
</dbReference>
<dbReference type="ProteomicsDB" id="75121">
    <molecule id="Q8WY21-3"/>
</dbReference>
<dbReference type="ProteomicsDB" id="75122">
    <molecule id="Q8WY21-4"/>
</dbReference>
<dbReference type="TopDownProteomics" id="Q8WY21-3">
    <molecule id="Q8WY21-3"/>
</dbReference>
<dbReference type="Antibodypedia" id="2334">
    <property type="antibodies" value="119 antibodies from 24 providers"/>
</dbReference>
<dbReference type="DNASU" id="114815"/>
<dbReference type="Ensembl" id="ENST00000263054.11">
    <molecule id="Q8WY21-1"/>
    <property type="protein sequence ID" value="ENSP00000263054.5"/>
    <property type="gene ID" value="ENSG00000108018.17"/>
</dbReference>
<dbReference type="GeneID" id="114815"/>
<dbReference type="KEGG" id="hsa:114815"/>
<dbReference type="MANE-Select" id="ENST00000263054.11">
    <property type="protein sequence ID" value="ENSP00000263054.5"/>
    <property type="RefSeq nucleotide sequence ID" value="NM_052918.5"/>
    <property type="RefSeq protein sequence ID" value="NP_443150.3"/>
</dbReference>
<dbReference type="UCSC" id="uc001kym.4">
    <molecule id="Q8WY21-1"/>
    <property type="organism name" value="human"/>
</dbReference>
<dbReference type="AGR" id="HGNC:16697"/>
<dbReference type="CTD" id="114815"/>
<dbReference type="DisGeNET" id="114815"/>
<dbReference type="GeneCards" id="SORCS1"/>
<dbReference type="HGNC" id="HGNC:16697">
    <property type="gene designation" value="SORCS1"/>
</dbReference>
<dbReference type="HPA" id="ENSG00000108018">
    <property type="expression patterns" value="Tissue enhanced (brain, thyroid gland)"/>
</dbReference>
<dbReference type="MalaCards" id="SORCS1"/>
<dbReference type="MIM" id="606283">
    <property type="type" value="gene"/>
</dbReference>
<dbReference type="neXtProt" id="NX_Q8WY21"/>
<dbReference type="OpenTargets" id="ENSG00000108018"/>
<dbReference type="PharmGKB" id="PA134861284"/>
<dbReference type="VEuPathDB" id="HostDB:ENSG00000108018"/>
<dbReference type="eggNOG" id="KOG3511">
    <property type="taxonomic scope" value="Eukaryota"/>
</dbReference>
<dbReference type="GeneTree" id="ENSGT01030000234563"/>
<dbReference type="InParanoid" id="Q8WY21"/>
<dbReference type="OMA" id="AYSHEQK"/>
<dbReference type="OrthoDB" id="443634at2759"/>
<dbReference type="PAN-GO" id="Q8WY21">
    <property type="GO annotations" value="3 GO annotations based on evolutionary models"/>
</dbReference>
<dbReference type="PhylomeDB" id="Q8WY21"/>
<dbReference type="TreeFam" id="TF324918"/>
<dbReference type="PathwayCommons" id="Q8WY21"/>
<dbReference type="SignaLink" id="Q8WY21"/>
<dbReference type="BioGRID-ORCS" id="114815">
    <property type="hits" value="7 hits in 1152 CRISPR screens"/>
</dbReference>
<dbReference type="ChiTaRS" id="SORCS1">
    <property type="organism name" value="human"/>
</dbReference>
<dbReference type="GenomeRNAi" id="114815"/>
<dbReference type="Pharos" id="Q8WY21">
    <property type="development level" value="Tbio"/>
</dbReference>
<dbReference type="PRO" id="PR:Q8WY21"/>
<dbReference type="Proteomes" id="UP000005640">
    <property type="component" value="Chromosome 10"/>
</dbReference>
<dbReference type="RNAct" id="Q8WY21">
    <property type="molecule type" value="protein"/>
</dbReference>
<dbReference type="Bgee" id="ENSG00000108018">
    <property type="expression patterns" value="Expressed in cortical plate and 128 other cell types or tissues"/>
</dbReference>
<dbReference type="ExpressionAtlas" id="Q8WY21">
    <property type="expression patterns" value="baseline and differential"/>
</dbReference>
<dbReference type="GO" id="GO:0005794">
    <property type="term" value="C:Golgi apparatus"/>
    <property type="evidence" value="ECO:0000318"/>
    <property type="project" value="GO_Central"/>
</dbReference>
<dbReference type="GO" id="GO:0016020">
    <property type="term" value="C:membrane"/>
    <property type="evidence" value="ECO:0000314"/>
    <property type="project" value="UniProtKB"/>
</dbReference>
<dbReference type="GO" id="GO:0008188">
    <property type="term" value="F:neuropeptide receptor activity"/>
    <property type="evidence" value="ECO:0000303"/>
    <property type="project" value="UniProtKB"/>
</dbReference>
<dbReference type="GO" id="GO:0007218">
    <property type="term" value="P:neuropeptide signaling pathway"/>
    <property type="evidence" value="ECO:0000303"/>
    <property type="project" value="UniProtKB"/>
</dbReference>
<dbReference type="GO" id="GO:0006892">
    <property type="term" value="P:post-Golgi vesicle-mediated transport"/>
    <property type="evidence" value="ECO:0000318"/>
    <property type="project" value="GO_Central"/>
</dbReference>
<dbReference type="FunFam" id="3.30.60.270:FF:000001">
    <property type="entry name" value="Sortilin related VPS10 domain containing receptor 1"/>
    <property type="match status" value="1"/>
</dbReference>
<dbReference type="FunFam" id="2.60.40.10:FF:000083">
    <property type="entry name" value="Sortilin-related VPS10 domain containing receptor 2"/>
    <property type="match status" value="1"/>
</dbReference>
<dbReference type="FunFam" id="2.10.70.80:FF:000001">
    <property type="entry name" value="Sortilin-related VPS10 domain-containing receptor 1"/>
    <property type="match status" value="1"/>
</dbReference>
<dbReference type="FunFam" id="2.130.10.10:FF:000198">
    <property type="entry name" value="VPS10 domain-containing receptor SorCS1 isoform X2"/>
    <property type="match status" value="1"/>
</dbReference>
<dbReference type="Gene3D" id="2.10.70.80">
    <property type="match status" value="1"/>
</dbReference>
<dbReference type="Gene3D" id="2.120.10.10">
    <property type="match status" value="1"/>
</dbReference>
<dbReference type="Gene3D" id="3.30.60.270">
    <property type="match status" value="1"/>
</dbReference>
<dbReference type="Gene3D" id="2.60.40.10">
    <property type="entry name" value="Immunoglobulins"/>
    <property type="match status" value="1"/>
</dbReference>
<dbReference type="Gene3D" id="2.130.10.10">
    <property type="entry name" value="YVTN repeat-like/Quinoprotein amine dehydrogenase"/>
    <property type="match status" value="1"/>
</dbReference>
<dbReference type="InterPro" id="IPR013783">
    <property type="entry name" value="Ig-like_fold"/>
</dbReference>
<dbReference type="InterPro" id="IPR000601">
    <property type="entry name" value="PKD_dom"/>
</dbReference>
<dbReference type="InterPro" id="IPR035986">
    <property type="entry name" value="PKD_dom_sf"/>
</dbReference>
<dbReference type="InterPro" id="IPR031777">
    <property type="entry name" value="Sortilin_C"/>
</dbReference>
<dbReference type="InterPro" id="IPR031778">
    <property type="entry name" value="Sortilin_N"/>
</dbReference>
<dbReference type="InterPro" id="IPR006581">
    <property type="entry name" value="VPS10"/>
</dbReference>
<dbReference type="InterPro" id="IPR050310">
    <property type="entry name" value="VPS10-sortilin"/>
</dbReference>
<dbReference type="InterPro" id="IPR015943">
    <property type="entry name" value="WD40/YVTN_repeat-like_dom_sf"/>
</dbReference>
<dbReference type="PANTHER" id="PTHR12106">
    <property type="entry name" value="SORTILIN RELATED"/>
    <property type="match status" value="1"/>
</dbReference>
<dbReference type="PANTHER" id="PTHR12106:SF8">
    <property type="entry name" value="VPS10 DOMAIN-CONTAINING RECEPTOR SORCS1"/>
    <property type="match status" value="1"/>
</dbReference>
<dbReference type="Pfam" id="PF00801">
    <property type="entry name" value="PKD"/>
    <property type="match status" value="1"/>
</dbReference>
<dbReference type="Pfam" id="PF15902">
    <property type="entry name" value="Sortilin-Vps10"/>
    <property type="match status" value="1"/>
</dbReference>
<dbReference type="Pfam" id="PF15901">
    <property type="entry name" value="Sortilin_C"/>
    <property type="match status" value="1"/>
</dbReference>
<dbReference type="SMART" id="SM00602">
    <property type="entry name" value="VPS10"/>
    <property type="match status" value="1"/>
</dbReference>
<dbReference type="SUPFAM" id="SSF110296">
    <property type="entry name" value="Oligoxyloglucan reducing end-specific cellobiohydrolase"/>
    <property type="match status" value="1"/>
</dbReference>
<dbReference type="SUPFAM" id="SSF49299">
    <property type="entry name" value="PKD domain"/>
    <property type="match status" value="2"/>
</dbReference>
<dbReference type="PROSITE" id="PS50093">
    <property type="entry name" value="PKD"/>
    <property type="match status" value="1"/>
</dbReference>
<name>SORC1_HUMAN</name>
<evidence type="ECO:0000255" key="1"/>
<evidence type="ECO:0000255" key="2">
    <source>
        <dbReference type="PROSITE-ProRule" id="PRU00151"/>
    </source>
</evidence>
<evidence type="ECO:0000256" key="3">
    <source>
        <dbReference type="SAM" id="MobiDB-lite"/>
    </source>
</evidence>
<evidence type="ECO:0000269" key="4">
    <source>
    </source>
</evidence>
<evidence type="ECO:0000269" key="5">
    <source>
    </source>
</evidence>
<evidence type="ECO:0000303" key="6">
    <source>
    </source>
</evidence>
<evidence type="ECO:0000305" key="7"/>
<protein>
    <recommendedName>
        <fullName>VPS10 domain-containing receptor SorCS1</fullName>
        <shortName>hSorCS</shortName>
    </recommendedName>
</protein>
<proteinExistence type="evidence at protein level"/>
<comment type="interaction">
    <interactant intactId="EBI-21198627">
        <id>Q8WY21</id>
    </interactant>
    <interactant intactId="EBI-1057058">
        <id>Q99523</id>
        <label>SORT1</label>
    </interactant>
    <organismsDiffer>false</organismsDiffer>
    <experiments>4</experiments>
</comment>
<comment type="subcellular location">
    <subcellularLocation>
        <location>Membrane</location>
        <topology>Single-pass type I membrane protein</topology>
    </subcellularLocation>
</comment>
<comment type="alternative products">
    <event type="alternative splicing"/>
    <isoform>
        <id>Q8WY21-1</id>
        <name>1</name>
        <name>B</name>
        <sequence type="displayed"/>
    </isoform>
    <isoform>
        <id>Q8WY21-2</id>
        <name>2</name>
        <sequence type="described" ref="VSP_006204"/>
    </isoform>
    <isoform>
        <id>Q8WY21-3</id>
        <name>3</name>
        <name>C</name>
        <sequence type="described" ref="VSP_015140"/>
    </isoform>
    <isoform>
        <id>Q8WY21-4</id>
        <name>4</name>
        <name>A</name>
        <sequence type="described" ref="VSP_015141"/>
    </isoform>
</comment>
<comment type="tissue specificity">
    <text>Detected in fetal and infant brain and in fetal retina.</text>
</comment>
<comment type="PTM">
    <text evidence="5">O-glycosylated.</text>
</comment>
<comment type="similarity">
    <text evidence="7">Belongs to the VPS10-related sortilin family. SORCS subfamily.</text>
</comment>
<comment type="sequence caution" evidence="7">
    <conflict type="erroneous initiation">
        <sequence resource="EMBL-CDS" id="BAD92379"/>
    </conflict>
    <text>Extended N-terminus.</text>
</comment>
<feature type="signal peptide" evidence="1">
    <location>
        <begin position="1"/>
        <end position="33"/>
    </location>
</feature>
<feature type="chain" id="PRO_0000033170" description="VPS10 domain-containing receptor SorCS1">
    <location>
        <begin position="34"/>
        <end position="1168"/>
    </location>
</feature>
<feature type="topological domain" description="Lumenal" evidence="1">
    <location>
        <begin position="34"/>
        <end position="1099"/>
    </location>
</feature>
<feature type="transmembrane region" description="Helical" evidence="1">
    <location>
        <begin position="1100"/>
        <end position="1120"/>
    </location>
</feature>
<feature type="topological domain" description="Cytoplasmic" evidence="1">
    <location>
        <begin position="1121"/>
        <end position="1168"/>
    </location>
</feature>
<feature type="repeat" description="BNR 1">
    <location>
        <begin position="208"/>
        <end position="219"/>
    </location>
</feature>
<feature type="repeat" description="BNR 2">
    <location>
        <begin position="256"/>
        <end position="267"/>
    </location>
</feature>
<feature type="repeat" description="BNR 3">
    <location>
        <begin position="492"/>
        <end position="503"/>
    </location>
</feature>
<feature type="repeat" description="BNR 4">
    <location>
        <begin position="569"/>
        <end position="580"/>
    </location>
</feature>
<feature type="repeat" description="BNR 5">
    <location>
        <begin position="611"/>
        <end position="622"/>
    </location>
</feature>
<feature type="domain" description="PKD" evidence="2">
    <location>
        <begin position="803"/>
        <end position="894"/>
    </location>
</feature>
<feature type="region of interest" description="Disordered" evidence="3">
    <location>
        <begin position="38"/>
        <end position="69"/>
    </location>
</feature>
<feature type="region of interest" description="Disordered" evidence="3">
    <location>
        <begin position="89"/>
        <end position="150"/>
    </location>
</feature>
<feature type="region of interest" description="Disordered" evidence="3">
    <location>
        <begin position="1129"/>
        <end position="1168"/>
    </location>
</feature>
<feature type="compositionally biased region" description="Low complexity" evidence="3">
    <location>
        <begin position="38"/>
        <end position="53"/>
    </location>
</feature>
<feature type="compositionally biased region" description="Basic and acidic residues" evidence="3">
    <location>
        <begin position="111"/>
        <end position="123"/>
    </location>
</feature>
<feature type="compositionally biased region" description="Basic and acidic residues" evidence="3">
    <location>
        <begin position="141"/>
        <end position="150"/>
    </location>
</feature>
<feature type="glycosylation site" description="O-linked (GalNAc...) threonine" evidence="5">
    <location>
        <position position="68"/>
    </location>
</feature>
<feature type="glycosylation site" description="N-linked (GlcNAc...) asparagine" evidence="1">
    <location>
        <position position="184"/>
    </location>
</feature>
<feature type="glycosylation site" description="N-linked (GlcNAc...) asparagine" evidence="1">
    <location>
        <position position="352"/>
    </location>
</feature>
<feature type="glycosylation site" description="N-linked (GlcNAc...) asparagine" evidence="1">
    <location>
        <position position="433"/>
    </location>
</feature>
<feature type="glycosylation site" description="N-linked (GlcNAc...) asparagine" evidence="1">
    <location>
        <position position="765"/>
    </location>
</feature>
<feature type="glycosylation site" description="N-linked (GlcNAc...) asparagine" evidence="1">
    <location>
        <position position="776"/>
    </location>
</feature>
<feature type="glycosylation site" description="N-linked (GlcNAc...) asparagine" evidence="1">
    <location>
        <position position="816"/>
    </location>
</feature>
<feature type="glycosylation site" description="N-linked (GlcNAc...) asparagine" evidence="1">
    <location>
        <position position="847"/>
    </location>
</feature>
<feature type="glycosylation site" description="N-linked (GlcNAc...) asparagine" evidence="1">
    <location>
        <position position="908"/>
    </location>
</feature>
<feature type="glycosylation site" description="N-linked (GlcNAc...) asparagine" evidence="1">
    <location>
        <position position="929"/>
    </location>
</feature>
<feature type="splice variant" id="VSP_006204" description="In isoform 2." evidence="7">
    <original>RVALPSPPSPSTQPGDSSLRLQRARHATPPSTPKRGSAGAQYAI</original>
    <variation>KIPGINVYAQMQNEKEQEMISPVSHSESRPNVPQTELRRPGQLIDEKVESQLIGSISIVAENQSTKEIPTYVNV</variation>
    <location>
        <begin position="1125"/>
        <end position="1168"/>
    </location>
</feature>
<feature type="splice variant" id="VSP_015140" description="In isoform 3." evidence="6">
    <original>RVALPSPPSPSTQPGDSSLRLQRARHATPPSTPKRGSAGAQYAI</original>
    <variation>KIPGINVYAQMQNEKEQEMISPVSHSESRPNVPQTELRRPGQLIDEKVESQLIGK</variation>
    <location>
        <begin position="1125"/>
        <end position="1168"/>
    </location>
</feature>
<feature type="splice variant" id="VSP_015141" description="In isoform 4." evidence="6">
    <original>RVALPSPPSPSTQPGDSSLRLQRARHATPPSTPKRGSAGAQYAI</original>
    <variation>CVSLYPRSPTPDLFLLPDRFRSMCYSDVHSSDGFY</variation>
    <location>
        <begin position="1125"/>
        <end position="1168"/>
    </location>
</feature>
<feature type="sequence variant" id="VAR_036374" description="In a breast cancer sample; somatic mutation." evidence="4">
    <original>K</original>
    <variation>N</variation>
    <location>
        <position position="223"/>
    </location>
</feature>
<feature type="sequence conflict" description="In Ref. 1; AAL56667." evidence="7" ref="1">
    <original>S</original>
    <variation>G</variation>
    <location>
        <position position="231"/>
    </location>
</feature>
<feature type="sequence conflict" description="In Ref. 1; AAL56667." evidence="7" ref="1">
    <original>N</original>
    <variation>Y</variation>
    <location>
        <position position="487"/>
    </location>
</feature>